<dbReference type="EMBL" id="BC103359">
    <property type="protein sequence ID" value="AAI03360.1"/>
    <property type="molecule type" value="mRNA"/>
</dbReference>
<dbReference type="RefSeq" id="NP_001030193.1">
    <property type="nucleotide sequence ID" value="NM_001035021.1"/>
</dbReference>
<dbReference type="FunCoup" id="Q3SYW0">
    <property type="interactions" value="103"/>
</dbReference>
<dbReference type="STRING" id="9913.ENSBTAP00000012776"/>
<dbReference type="PaxDb" id="9913-ENSBTAP00000012776"/>
<dbReference type="GeneID" id="505376"/>
<dbReference type="KEGG" id="bta:505376"/>
<dbReference type="CTD" id="201456"/>
<dbReference type="eggNOG" id="ENOG502QPX2">
    <property type="taxonomic scope" value="Eukaryota"/>
</dbReference>
<dbReference type="HOGENOM" id="CLU_047012_0_0_1"/>
<dbReference type="InParanoid" id="Q3SYW0"/>
<dbReference type="OrthoDB" id="3219396at2759"/>
<dbReference type="TreeFam" id="TF332483"/>
<dbReference type="Proteomes" id="UP000009136">
    <property type="component" value="Unplaced"/>
</dbReference>
<dbReference type="GO" id="GO:0019005">
    <property type="term" value="C:SCF ubiquitin ligase complex"/>
    <property type="evidence" value="ECO:0000318"/>
    <property type="project" value="GO_Central"/>
</dbReference>
<dbReference type="CDD" id="cd22093">
    <property type="entry name" value="F-box_FBXO15"/>
    <property type="match status" value="1"/>
</dbReference>
<dbReference type="Gene3D" id="1.20.1280.50">
    <property type="match status" value="1"/>
</dbReference>
<dbReference type="InterPro" id="IPR036047">
    <property type="entry name" value="F-box-like_dom_sf"/>
</dbReference>
<dbReference type="InterPro" id="IPR001810">
    <property type="entry name" value="F-box_dom"/>
</dbReference>
<dbReference type="PANTHER" id="PTHR46731">
    <property type="entry name" value="F-BOX ONLY PROTEIN 15"/>
    <property type="match status" value="1"/>
</dbReference>
<dbReference type="PANTHER" id="PTHR46731:SF1">
    <property type="entry name" value="F-BOX ONLY PROTEIN 15"/>
    <property type="match status" value="1"/>
</dbReference>
<dbReference type="Pfam" id="PF12937">
    <property type="entry name" value="F-box-like"/>
    <property type="match status" value="1"/>
</dbReference>
<dbReference type="SMART" id="SM00256">
    <property type="entry name" value="FBOX"/>
    <property type="match status" value="1"/>
</dbReference>
<dbReference type="SUPFAM" id="SSF81383">
    <property type="entry name" value="F-box domain"/>
    <property type="match status" value="1"/>
</dbReference>
<dbReference type="PROSITE" id="PS50181">
    <property type="entry name" value="FBOX"/>
    <property type="match status" value="1"/>
</dbReference>
<organism>
    <name type="scientific">Bos taurus</name>
    <name type="common">Bovine</name>
    <dbReference type="NCBI Taxonomy" id="9913"/>
    <lineage>
        <taxon>Eukaryota</taxon>
        <taxon>Metazoa</taxon>
        <taxon>Chordata</taxon>
        <taxon>Craniata</taxon>
        <taxon>Vertebrata</taxon>
        <taxon>Euteleostomi</taxon>
        <taxon>Mammalia</taxon>
        <taxon>Eutheria</taxon>
        <taxon>Laurasiatheria</taxon>
        <taxon>Artiodactyla</taxon>
        <taxon>Ruminantia</taxon>
        <taxon>Pecora</taxon>
        <taxon>Bovidae</taxon>
        <taxon>Bovinae</taxon>
        <taxon>Bos</taxon>
    </lineage>
</organism>
<accession>Q3SYW0</accession>
<comment type="function">
    <text evidence="1">Substrate-recognition component of the SCF (SKP1-CUL1-F-box protein)-type E3 ubiquitin ligase complex.</text>
</comment>
<comment type="subunit">
    <text evidence="1">Directly interacts with SKP1 and CUL1.</text>
</comment>
<name>FBX15_BOVIN</name>
<gene>
    <name type="primary">FBXO15</name>
</gene>
<sequence>MLPAGPAALSRRARQDKVCRRPSTGCSASLDSLPSEVLLKILSYLDAAALLCAGCVNRRFYHLANDNFIWIRIYSTAFSPRRSHWRVDPAEKTDLSVNLLSAGDKEAGYWKKEYLTKQIASVKAALARVLKPLHPHTGLPVKTKEALRVSGLGWVIILRAADGREYTMEHADLSVNDSSVTVVWYGKDWPPLATLSTLDLCGATPVFMGQSRTPSRIRPRWHSLITKYQLSQLTESSAVGGDRLMRVFCLPPGLVVGLWKREEELAFVMANLHLHCLVERSMLGSPAVPYELPPHTPVSDDSPERGLHGYRLHVDMHSGGASCLCGSFHNLSASKGYLENEYMKLTVISFKNNTEHLPLIGKVGLSWKTNSFDGCIKSCSIMDLTLLEEYGKPFWCFSSPVCVRCCPGPSDGPSFLGEAYCVDYSDSEGRLHMELVWVEETEEYFIVSLALYLRLAKVNQWFGTQY</sequence>
<reference key="1">
    <citation type="submission" date="2005-08" db="EMBL/GenBank/DDBJ databases">
        <authorList>
            <consortium name="NIH - Mammalian Gene Collection (MGC) project"/>
        </authorList>
    </citation>
    <scope>NUCLEOTIDE SEQUENCE [LARGE SCALE MRNA]</scope>
    <source>
        <strain>Crossbred X Angus</strain>
        <tissue>Ileum</tissue>
    </source>
</reference>
<keyword id="KW-1185">Reference proteome</keyword>
<keyword id="KW-0833">Ubl conjugation pathway</keyword>
<evidence type="ECO:0000250" key="1"/>
<evidence type="ECO:0000255" key="2">
    <source>
        <dbReference type="PROSITE-ProRule" id="PRU00080"/>
    </source>
</evidence>
<feature type="chain" id="PRO_0000235794" description="F-box only protein 15">
    <location>
        <begin position="1"/>
        <end position="466"/>
    </location>
</feature>
<feature type="domain" description="F-box" evidence="2">
    <location>
        <begin position="27"/>
        <end position="73"/>
    </location>
</feature>
<proteinExistence type="evidence at transcript level"/>
<protein>
    <recommendedName>
        <fullName>F-box only protein 15</fullName>
    </recommendedName>
</protein>